<sequence>MPLPDFRLIRLLPLAALVLTACSVTTPKGPGKSPDSPQWRQHQQDVRNLNQYQTHGAFAYISDQQKVYARFFWQQTGQDRYRLLLTNPLGSTELELNAQPGNVQLVDNKGQRYTADDAEEMIGKLTGMPIPLNSLRQWILGLPGDATDYKLDDQYRLSEITYSQNGKNWKVVYGGYDTKTHPAMPANMELTDGGQRIKLKMDNWIVK</sequence>
<accession>B2TZV7</accession>
<dbReference type="EMBL" id="CP001063">
    <property type="protein sequence ID" value="ACD08450.1"/>
    <property type="molecule type" value="Genomic_DNA"/>
</dbReference>
<dbReference type="RefSeq" id="WP_001130683.1">
    <property type="nucleotide sequence ID" value="NC_010658.1"/>
</dbReference>
<dbReference type="SMR" id="B2TZV7"/>
<dbReference type="STRING" id="344609.SbBS512_E1373"/>
<dbReference type="KEGG" id="sbc:SbBS512_E1373"/>
<dbReference type="HOGENOM" id="CLU_092816_1_1_6"/>
<dbReference type="Proteomes" id="UP000001030">
    <property type="component" value="Chromosome"/>
</dbReference>
<dbReference type="GO" id="GO:0009279">
    <property type="term" value="C:cell outer membrane"/>
    <property type="evidence" value="ECO:0007669"/>
    <property type="project" value="UniProtKB-SubCell"/>
</dbReference>
<dbReference type="GO" id="GO:0044874">
    <property type="term" value="P:lipoprotein localization to outer membrane"/>
    <property type="evidence" value="ECO:0007669"/>
    <property type="project" value="UniProtKB-UniRule"/>
</dbReference>
<dbReference type="GO" id="GO:0015031">
    <property type="term" value="P:protein transport"/>
    <property type="evidence" value="ECO:0007669"/>
    <property type="project" value="UniProtKB-KW"/>
</dbReference>
<dbReference type="CDD" id="cd16326">
    <property type="entry name" value="LolB"/>
    <property type="match status" value="1"/>
</dbReference>
<dbReference type="FunFam" id="2.50.20.10:FF:000002">
    <property type="entry name" value="Outer-membrane lipoprotein LolB"/>
    <property type="match status" value="1"/>
</dbReference>
<dbReference type="Gene3D" id="2.50.20.10">
    <property type="entry name" value="Lipoprotein localisation LolA/LolB/LppX"/>
    <property type="match status" value="1"/>
</dbReference>
<dbReference type="HAMAP" id="MF_00233">
    <property type="entry name" value="LolB"/>
    <property type="match status" value="1"/>
</dbReference>
<dbReference type="InterPro" id="IPR029046">
    <property type="entry name" value="LolA/LolB/LppX"/>
</dbReference>
<dbReference type="InterPro" id="IPR004565">
    <property type="entry name" value="OM_lipoprot_LolB"/>
</dbReference>
<dbReference type="NCBIfam" id="TIGR00548">
    <property type="entry name" value="lolB"/>
    <property type="match status" value="1"/>
</dbReference>
<dbReference type="Pfam" id="PF03550">
    <property type="entry name" value="LolB"/>
    <property type="match status" value="1"/>
</dbReference>
<dbReference type="SUPFAM" id="SSF89392">
    <property type="entry name" value="Prokaryotic lipoproteins and lipoprotein localization factors"/>
    <property type="match status" value="1"/>
</dbReference>
<dbReference type="PROSITE" id="PS51257">
    <property type="entry name" value="PROKAR_LIPOPROTEIN"/>
    <property type="match status" value="1"/>
</dbReference>
<protein>
    <recommendedName>
        <fullName evidence="1">Outer-membrane lipoprotein LolB</fullName>
    </recommendedName>
</protein>
<proteinExistence type="inferred from homology"/>
<comment type="function">
    <text evidence="1">Plays a critical role in the incorporation of lipoproteins in the outer membrane after they are released by the LolA protein.</text>
</comment>
<comment type="subunit">
    <text evidence="1">Monomer.</text>
</comment>
<comment type="subcellular location">
    <subcellularLocation>
        <location evidence="1">Cell outer membrane</location>
        <topology evidence="1">Lipid-anchor</topology>
    </subcellularLocation>
</comment>
<comment type="similarity">
    <text evidence="1">Belongs to the LolB family.</text>
</comment>
<keyword id="KW-0998">Cell outer membrane</keyword>
<keyword id="KW-0143">Chaperone</keyword>
<keyword id="KW-0449">Lipoprotein</keyword>
<keyword id="KW-0472">Membrane</keyword>
<keyword id="KW-0564">Palmitate</keyword>
<keyword id="KW-0653">Protein transport</keyword>
<keyword id="KW-1185">Reference proteome</keyword>
<keyword id="KW-0732">Signal</keyword>
<keyword id="KW-0813">Transport</keyword>
<reference key="1">
    <citation type="submission" date="2008-05" db="EMBL/GenBank/DDBJ databases">
        <title>Complete sequence of Shigella boydii serotype 18 strain BS512.</title>
        <authorList>
            <person name="Rasko D.A."/>
            <person name="Rosovitz M."/>
            <person name="Maurelli A.T."/>
            <person name="Myers G."/>
            <person name="Seshadri R."/>
            <person name="Cer R."/>
            <person name="Jiang L."/>
            <person name="Ravel J."/>
            <person name="Sebastian Y."/>
        </authorList>
    </citation>
    <scope>NUCLEOTIDE SEQUENCE [LARGE SCALE GENOMIC DNA]</scope>
    <source>
        <strain>CDC 3083-94 / BS512</strain>
    </source>
</reference>
<name>LOLB_SHIB3</name>
<evidence type="ECO:0000255" key="1">
    <source>
        <dbReference type="HAMAP-Rule" id="MF_00233"/>
    </source>
</evidence>
<organism>
    <name type="scientific">Shigella boydii serotype 18 (strain CDC 3083-94 / BS512)</name>
    <dbReference type="NCBI Taxonomy" id="344609"/>
    <lineage>
        <taxon>Bacteria</taxon>
        <taxon>Pseudomonadati</taxon>
        <taxon>Pseudomonadota</taxon>
        <taxon>Gammaproteobacteria</taxon>
        <taxon>Enterobacterales</taxon>
        <taxon>Enterobacteriaceae</taxon>
        <taxon>Shigella</taxon>
    </lineage>
</organism>
<gene>
    <name evidence="1" type="primary">lolB</name>
    <name type="ordered locus">SbBS512_E1373</name>
</gene>
<feature type="signal peptide" evidence="1">
    <location>
        <begin position="1"/>
        <end position="21"/>
    </location>
</feature>
<feature type="chain" id="PRO_1000100511" description="Outer-membrane lipoprotein LolB">
    <location>
        <begin position="22"/>
        <end position="207"/>
    </location>
</feature>
<feature type="lipid moiety-binding region" description="N-palmitoyl cysteine" evidence="1">
    <location>
        <position position="22"/>
    </location>
</feature>
<feature type="lipid moiety-binding region" description="S-diacylglycerol cysteine" evidence="1">
    <location>
        <position position="22"/>
    </location>
</feature>